<sequence length="634" mass="68588">MAVSAPPVISATSSSAGVPGGLFRAEPLYSSPGEPPRLTPNMINSFMANNHNGSVLGGGIGGGSGGSSNTNTNECRMVDMHGVKVASFLMDGQELICLPQVFDLFLKHLVGGLHTVYTKLKRLDISPVVCTVEQVRILRGLGAIQPGVNRCKLITRKDFETLFTDCTNARRKRQMTRKQAVNSSRPGRPPKRSLGVLQDNARLLPHAVPGLLSPGLITPTGITAAAMAEAMKLQKMKLMAMNTLQGNGSQNGTESEPDDLNSTTGGSESSWDKDKIQSPLAASGPQHGIAHAALAGQPGLGGAPTLNPLQQNHLLSNRLDLPFMMMPHPLLPVSLPPASVAMAMNQMNHLNTIANMAAAAQIHSPLSRAGASVIKERIPESPSPAPSLEESHRPGSQTSSHPSSSVSSSPSQMDHHSERMVMMPNNREELIVDQDNGQSIKKFQRDNKEEVPAQIPVMKSPLDKIQLAPGQALHPGFPGPFIFADSLSSVETLLTNIQGLLKVALDNARIQEKQIQQEKKELRIELFREREIRENLERQLAVELQSRSTMQKRLKKEKKAKRKLQEALEFESKRREQVEQALKQATSGDSGLRMLKDSGIPDIEIENSGTPHDSAAMQGGNYYCLAMAQQLCSA</sequence>
<name>DACH2_MOUSE</name>
<evidence type="ECO:0000250" key="1"/>
<evidence type="ECO:0000255" key="2"/>
<evidence type="ECO:0000256" key="3">
    <source>
        <dbReference type="SAM" id="MobiDB-lite"/>
    </source>
</evidence>
<evidence type="ECO:0000269" key="4">
    <source>
    </source>
</evidence>
<evidence type="ECO:0000269" key="5">
    <source>
    </source>
</evidence>
<evidence type="ECO:0000269" key="6">
    <source>
    </source>
</evidence>
<evidence type="ECO:0000303" key="7">
    <source>
    </source>
</evidence>
<evidence type="ECO:0000303" key="8">
    <source>
    </source>
</evidence>
<evidence type="ECO:0000305" key="9"/>
<keyword id="KW-0025">Alternative splicing</keyword>
<keyword id="KW-0175">Coiled coil</keyword>
<keyword id="KW-0217">Developmental protein</keyword>
<keyword id="KW-0238">DNA-binding</keyword>
<keyword id="KW-0539">Nucleus</keyword>
<keyword id="KW-1185">Reference proteome</keyword>
<keyword id="KW-0678">Repressor</keyword>
<keyword id="KW-0804">Transcription</keyword>
<keyword id="KW-0805">Transcription regulation</keyword>
<organism>
    <name type="scientific">Mus musculus</name>
    <name type="common">Mouse</name>
    <dbReference type="NCBI Taxonomy" id="10090"/>
    <lineage>
        <taxon>Eukaryota</taxon>
        <taxon>Metazoa</taxon>
        <taxon>Chordata</taxon>
        <taxon>Craniata</taxon>
        <taxon>Vertebrata</taxon>
        <taxon>Euteleostomi</taxon>
        <taxon>Mammalia</taxon>
        <taxon>Eutheria</taxon>
        <taxon>Euarchontoglires</taxon>
        <taxon>Glires</taxon>
        <taxon>Rodentia</taxon>
        <taxon>Myomorpha</taxon>
        <taxon>Muroidea</taxon>
        <taxon>Muridae</taxon>
        <taxon>Murinae</taxon>
        <taxon>Mus</taxon>
        <taxon>Mus</taxon>
    </lineage>
</organism>
<comment type="function">
    <text evidence="5 6">Transcription factor that is involved in regulation of organogenesis. Seems to be a regulator for SIX1 and SIX6. Seems to act as a corepressor of SIX6 in regulating proliferation by directly repressing cyclin-dependent kinase inhibitors, including the p27Kip1 promoter. Is recruited with SIX6 to the p27Kip1 promoter in embryonal retina. SIX6 corepression also seems to involve NCOR1, TBL1, HDAC1 and HDAC3. May be involved together with PAX3, SIX1, and EYA2 in regulation of myogenesis. In the developing somite, expression of DACH2 and PAX3 is regulated by the overlying ectoderm, and DACH2 and PAX3 positively regulate each other's expression. Probably binds to DNA via its DACHbox-N domain.</text>
</comment>
<comment type="subunit">
    <text evidence="1">Interacts with SIX6. Interacts with EYA2 (By similarity).</text>
</comment>
<comment type="subcellular location">
    <subcellularLocation>
        <location evidence="9">Nucleus</location>
    </subcellularLocation>
</comment>
<comment type="alternative products">
    <event type="alternative splicing"/>
    <isoform>
        <id>Q925Q8-1</id>
        <name>1</name>
        <sequence type="displayed"/>
    </isoform>
    <isoform>
        <id>Q925Q8-2</id>
        <name>2</name>
        <sequence type="described" ref="VSP_009493 VSP_009494"/>
    </isoform>
    <isoform>
        <id>Q925Q8-3</id>
        <name>3</name>
        <sequence type="described" ref="VSP_009495 VSP_009496 VSP_009497"/>
    </isoform>
</comment>
<comment type="tissue specificity">
    <text evidence="4">Expressed in embryo, and at lower levels in the newborn.</text>
</comment>
<comment type="developmental stage">
    <text evidence="4">From 8.5 to 14.5 dpc detected in nervous tissue. In the brain detected at 8.5 dpc within the prospective hindbrain, but not within the developing forebrain or midbrain. At 9.5 dpc expressed within the ventral prosencephalon, hindbrain and forebrain. Expression within the forebrain neuroectoderm flanked the optic vesicle with rostral and caudal restrictions. In addition, dorsal and ventral expression domains were observed within the hindbrain. At 10.5 to 12.5 dpc detected in the dorsal mesencephalon, in addition to the telencephalon and hindbrain. At 14.5 dpc visible in the olfactory bulbs. Detected from 9.5 to 12.5 dpc in the dorsal neural tube with the highest expression near the hindbrain. At 9.5 and 10.5 dpc detected in cells located in the dorsal and ventral neural tube and dorsal root ganglia. Detected during the development of the optic and the auditory systems. At 10.5 dpc, a small ring of ocular staining was observed suggesting expression in the lens pit. At 10.5 dpc expressed in the developing lens epithelium and in the mesenchyme surrounding the retina. However, expression in the lens placode ectoderm was not detected, suggesting that DACH2 is activated after lens vesicle formation. Low levels of expression could also be detected in the peripheral neuroretina at 10.5 and 12.5 dpc. Detected in the otic pit at 9.5 dpc and in the otic endolymphatic duct at 10.5, 11.5 and 12.5 dpc. From 10.5 to 14.5 dpc detected in the developing fore and hind limbs. At 10.5 and 11.5 dpc observed in the anterior and posterior margins and presumptive hand plate of the limb bud. At 9.5 and 10.5 dpc expressed in the limb. At 12.5 dpc is detected in the hand plate with strong expression at the margins of the limb plate. At 14.5 dpc detected in the hand plate and lateral edges of the digits. At 8.5 dpc expression was not detected in the developing somites. In contrast, from 9.5 to 12.5 dpc, expression is detected in a repeated pattern located lateral to the neural tube and in the interlimb bud region suggesting expression in somite derivatives. At 9.5 dpc detected in the forelimb dermamyotome. Also located along the lateral portion of the trunk and within a dorsal domain within the limb bud. At 10.5 dpc expressed in lateral and limb mesoderm. From 9.5 to 10.5 dpc detected in head mesenchyme and the branchial arches. At 9.5 and 10 dpc. expressed in the head mesoderm associated with the developing eye. At 10.5 dpc this pattern appears as a ring of expression surrounding the eye. At 11.5 dpc expression is still detectable in the branchial arches with strong expression at the cranial sinus. At 14.5 dpc mammary gland primordia. Detected in the nasal openings and vibrissae.</text>
</comment>
<comment type="domain">
    <text evidence="1">The DACHbox-N domain forms a structure containing a DNA binding motif similar to that of the forkhead/winged helix domain.</text>
</comment>
<comment type="similarity">
    <text evidence="9">Belongs to the DACH/dachshund family.</text>
</comment>
<protein>
    <recommendedName>
        <fullName>Dachshund homolog 2</fullName>
        <shortName>Dach2</shortName>
    </recommendedName>
</protein>
<feature type="chain" id="PRO_0000095600" description="Dachshund homolog 2">
    <location>
        <begin position="1"/>
        <end position="634"/>
    </location>
</feature>
<feature type="region of interest" description="DACHbox-N">
    <location>
        <begin position="76"/>
        <end position="162"/>
    </location>
</feature>
<feature type="region of interest" description="Disordered" evidence="3">
    <location>
        <begin position="171"/>
        <end position="194"/>
    </location>
</feature>
<feature type="region of interest" description="Disordered" evidence="3">
    <location>
        <begin position="244"/>
        <end position="286"/>
    </location>
</feature>
<feature type="region of interest" description="Disordered" evidence="3">
    <location>
        <begin position="378"/>
        <end position="416"/>
    </location>
</feature>
<feature type="region of interest" description="DACHbox-C">
    <location>
        <begin position="488"/>
        <end position="568"/>
    </location>
</feature>
<feature type="coiled-coil region" evidence="2">
    <location>
        <begin position="494"/>
        <end position="588"/>
    </location>
</feature>
<feature type="compositionally biased region" description="Polar residues" evidence="3">
    <location>
        <begin position="244"/>
        <end position="269"/>
    </location>
</feature>
<feature type="compositionally biased region" description="Low complexity" evidence="3">
    <location>
        <begin position="396"/>
        <end position="412"/>
    </location>
</feature>
<feature type="splice variant" id="VSP_009495" description="In isoform 3." evidence="8">
    <location>
        <begin position="1"/>
        <end position="174"/>
    </location>
</feature>
<feature type="splice variant" id="VSP_009493" description="In isoform 2." evidence="7">
    <location>
        <begin position="170"/>
        <end position="182"/>
    </location>
</feature>
<feature type="splice variant" id="VSP_009496" description="In isoform 3." evidence="8">
    <original>E</original>
    <variation>DIQLSQHHLLNTFLHWIELAPLSKKSLHHQK</variation>
    <location>
        <position position="449"/>
    </location>
</feature>
<feature type="splice variant" id="VSP_009497" description="In isoform 3." evidence="8">
    <original>Q</original>
    <variation>QVNNISINKIN</variation>
    <location>
        <position position="498"/>
    </location>
</feature>
<feature type="splice variant" id="VSP_009494" description="In isoform 2." evidence="7">
    <original>GGNYYCLAMAQQLCSA</original>
    <variation>A</variation>
    <location>
        <begin position="619"/>
        <end position="634"/>
    </location>
</feature>
<feature type="sequence conflict" description="In Ref. 2; BAC28138." evidence="9" ref="2">
    <original>N</original>
    <variation>D</variation>
    <location>
        <position position="507"/>
    </location>
</feature>
<proteinExistence type="evidence at protein level"/>
<accession>Q925Q8</accession>
<accession>Q8BMA0</accession>
<reference key="1">
    <citation type="journal article" date="2001" name="Mech. Dev.">
        <title>Characterization of mouse Dach2, a homologue of Drosophila dachshund.</title>
        <authorList>
            <person name="Davis R.J."/>
            <person name="Shen W."/>
            <person name="Sandler Y.I."/>
            <person name="Heanue T.A."/>
            <person name="Mardon G."/>
        </authorList>
    </citation>
    <scope>NUCLEOTIDE SEQUENCE [MRNA] (ISOFORM 1)</scope>
    <scope>TISSUE SPECIFICITY</scope>
    <scope>DEVELOPMENTAL STAGE</scope>
    <source>
        <strain>Swiss Webster / NIH</strain>
    </source>
</reference>
<reference key="2">
    <citation type="journal article" date="2005" name="Science">
        <title>The transcriptional landscape of the mammalian genome.</title>
        <authorList>
            <person name="Carninci P."/>
            <person name="Kasukawa T."/>
            <person name="Katayama S."/>
            <person name="Gough J."/>
            <person name="Frith M.C."/>
            <person name="Maeda N."/>
            <person name="Oyama R."/>
            <person name="Ravasi T."/>
            <person name="Lenhard B."/>
            <person name="Wells C."/>
            <person name="Kodzius R."/>
            <person name="Shimokawa K."/>
            <person name="Bajic V.B."/>
            <person name="Brenner S.E."/>
            <person name="Batalov S."/>
            <person name="Forrest A.R."/>
            <person name="Zavolan M."/>
            <person name="Davis M.J."/>
            <person name="Wilming L.G."/>
            <person name="Aidinis V."/>
            <person name="Allen J.E."/>
            <person name="Ambesi-Impiombato A."/>
            <person name="Apweiler R."/>
            <person name="Aturaliya R.N."/>
            <person name="Bailey T.L."/>
            <person name="Bansal M."/>
            <person name="Baxter L."/>
            <person name="Beisel K.W."/>
            <person name="Bersano T."/>
            <person name="Bono H."/>
            <person name="Chalk A.M."/>
            <person name="Chiu K.P."/>
            <person name="Choudhary V."/>
            <person name="Christoffels A."/>
            <person name="Clutterbuck D.R."/>
            <person name="Crowe M.L."/>
            <person name="Dalla E."/>
            <person name="Dalrymple B.P."/>
            <person name="de Bono B."/>
            <person name="Della Gatta G."/>
            <person name="di Bernardo D."/>
            <person name="Down T."/>
            <person name="Engstrom P."/>
            <person name="Fagiolini M."/>
            <person name="Faulkner G."/>
            <person name="Fletcher C.F."/>
            <person name="Fukushima T."/>
            <person name="Furuno M."/>
            <person name="Futaki S."/>
            <person name="Gariboldi M."/>
            <person name="Georgii-Hemming P."/>
            <person name="Gingeras T.R."/>
            <person name="Gojobori T."/>
            <person name="Green R.E."/>
            <person name="Gustincich S."/>
            <person name="Harbers M."/>
            <person name="Hayashi Y."/>
            <person name="Hensch T.K."/>
            <person name="Hirokawa N."/>
            <person name="Hill D."/>
            <person name="Huminiecki L."/>
            <person name="Iacono M."/>
            <person name="Ikeo K."/>
            <person name="Iwama A."/>
            <person name="Ishikawa T."/>
            <person name="Jakt M."/>
            <person name="Kanapin A."/>
            <person name="Katoh M."/>
            <person name="Kawasawa Y."/>
            <person name="Kelso J."/>
            <person name="Kitamura H."/>
            <person name="Kitano H."/>
            <person name="Kollias G."/>
            <person name="Krishnan S.P."/>
            <person name="Kruger A."/>
            <person name="Kummerfeld S.K."/>
            <person name="Kurochkin I.V."/>
            <person name="Lareau L.F."/>
            <person name="Lazarevic D."/>
            <person name="Lipovich L."/>
            <person name="Liu J."/>
            <person name="Liuni S."/>
            <person name="McWilliam S."/>
            <person name="Madan Babu M."/>
            <person name="Madera M."/>
            <person name="Marchionni L."/>
            <person name="Matsuda H."/>
            <person name="Matsuzawa S."/>
            <person name="Miki H."/>
            <person name="Mignone F."/>
            <person name="Miyake S."/>
            <person name="Morris K."/>
            <person name="Mottagui-Tabar S."/>
            <person name="Mulder N."/>
            <person name="Nakano N."/>
            <person name="Nakauchi H."/>
            <person name="Ng P."/>
            <person name="Nilsson R."/>
            <person name="Nishiguchi S."/>
            <person name="Nishikawa S."/>
            <person name="Nori F."/>
            <person name="Ohara O."/>
            <person name="Okazaki Y."/>
            <person name="Orlando V."/>
            <person name="Pang K.C."/>
            <person name="Pavan W.J."/>
            <person name="Pavesi G."/>
            <person name="Pesole G."/>
            <person name="Petrovsky N."/>
            <person name="Piazza S."/>
            <person name="Reed J."/>
            <person name="Reid J.F."/>
            <person name="Ring B.Z."/>
            <person name="Ringwald M."/>
            <person name="Rost B."/>
            <person name="Ruan Y."/>
            <person name="Salzberg S.L."/>
            <person name="Sandelin A."/>
            <person name="Schneider C."/>
            <person name="Schoenbach C."/>
            <person name="Sekiguchi K."/>
            <person name="Semple C.A."/>
            <person name="Seno S."/>
            <person name="Sessa L."/>
            <person name="Sheng Y."/>
            <person name="Shibata Y."/>
            <person name="Shimada H."/>
            <person name="Shimada K."/>
            <person name="Silva D."/>
            <person name="Sinclair B."/>
            <person name="Sperling S."/>
            <person name="Stupka E."/>
            <person name="Sugiura K."/>
            <person name="Sultana R."/>
            <person name="Takenaka Y."/>
            <person name="Taki K."/>
            <person name="Tammoja K."/>
            <person name="Tan S.L."/>
            <person name="Tang S."/>
            <person name="Taylor M.S."/>
            <person name="Tegner J."/>
            <person name="Teichmann S.A."/>
            <person name="Ueda H.R."/>
            <person name="van Nimwegen E."/>
            <person name="Verardo R."/>
            <person name="Wei C.L."/>
            <person name="Yagi K."/>
            <person name="Yamanishi H."/>
            <person name="Zabarovsky E."/>
            <person name="Zhu S."/>
            <person name="Zimmer A."/>
            <person name="Hide W."/>
            <person name="Bult C."/>
            <person name="Grimmond S.M."/>
            <person name="Teasdale R.D."/>
            <person name="Liu E.T."/>
            <person name="Brusic V."/>
            <person name="Quackenbush J."/>
            <person name="Wahlestedt C."/>
            <person name="Mattick J.S."/>
            <person name="Hume D.A."/>
            <person name="Kai C."/>
            <person name="Sasaki D."/>
            <person name="Tomaru Y."/>
            <person name="Fukuda S."/>
            <person name="Kanamori-Katayama M."/>
            <person name="Suzuki M."/>
            <person name="Aoki J."/>
            <person name="Arakawa T."/>
            <person name="Iida J."/>
            <person name="Imamura K."/>
            <person name="Itoh M."/>
            <person name="Kato T."/>
            <person name="Kawaji H."/>
            <person name="Kawagashira N."/>
            <person name="Kawashima T."/>
            <person name="Kojima M."/>
            <person name="Kondo S."/>
            <person name="Konno H."/>
            <person name="Nakano K."/>
            <person name="Ninomiya N."/>
            <person name="Nishio T."/>
            <person name="Okada M."/>
            <person name="Plessy C."/>
            <person name="Shibata K."/>
            <person name="Shiraki T."/>
            <person name="Suzuki S."/>
            <person name="Tagami M."/>
            <person name="Waki K."/>
            <person name="Watahiki A."/>
            <person name="Okamura-Oho Y."/>
            <person name="Suzuki H."/>
            <person name="Kawai J."/>
            <person name="Hayashizaki Y."/>
        </authorList>
    </citation>
    <scope>NUCLEOTIDE SEQUENCE [LARGE SCALE MRNA] (ISOFORM 3)</scope>
    <source>
        <strain>C57BL/6J</strain>
        <tissue>Eye</tissue>
    </source>
</reference>
<reference key="3">
    <citation type="journal article" date="2004" name="Genome Res.">
        <title>The status, quality, and expansion of the NIH full-length cDNA project: the Mammalian Gene Collection (MGC).</title>
        <authorList>
            <consortium name="The MGC Project Team"/>
        </authorList>
    </citation>
    <scope>NUCLEOTIDE SEQUENCE [LARGE SCALE MRNA] (ISOFORM 2)</scope>
    <source>
        <strain>C57BL/6J</strain>
        <tissue>Brain</tissue>
    </source>
</reference>
<reference key="4">
    <citation type="journal article" date="2002" name="Science">
        <title>Tissue-specific regulation of retinal and pituitary precursor cell proliferation.</title>
        <authorList>
            <person name="Li X."/>
            <person name="Perissi V."/>
            <person name="Liu F."/>
            <person name="Rose D.W."/>
            <person name="Rosenfeld M.G."/>
        </authorList>
    </citation>
    <scope>FUNCTION</scope>
    <scope>INTERACTION WITH SIX6</scope>
</reference>
<reference key="5">
    <citation type="journal article" date="2002" name="Dev. Dyn.">
        <title>Pax3 and Dach2 positive regulation in the developing somite.</title>
        <authorList>
            <person name="Kardon G."/>
            <person name="Heanue T.A."/>
            <person name="Tabin C.J."/>
        </authorList>
    </citation>
    <scope>FUNCTION</scope>
</reference>
<dbReference type="EMBL" id="AF257217">
    <property type="protein sequence ID" value="AAK39983.1"/>
    <property type="molecule type" value="mRNA"/>
</dbReference>
<dbReference type="EMBL" id="AK033050">
    <property type="protein sequence ID" value="BAC28138.1"/>
    <property type="molecule type" value="mRNA"/>
</dbReference>
<dbReference type="EMBL" id="BC059233">
    <property type="protein sequence ID" value="AAH59233.1"/>
    <property type="molecule type" value="mRNA"/>
</dbReference>
<dbReference type="CCDS" id="CCDS30363.1">
    <molecule id="Q925Q8-1"/>
</dbReference>
<dbReference type="CCDS" id="CCDS53175.1">
    <molecule id="Q925Q8-2"/>
</dbReference>
<dbReference type="CCDS" id="CCDS81163.1">
    <molecule id="Q925Q8-3"/>
</dbReference>
<dbReference type="RefSeq" id="NP_001136042.1">
    <molecule id="Q925Q8-2"/>
    <property type="nucleotide sequence ID" value="NM_001142570.1"/>
</dbReference>
<dbReference type="RefSeq" id="NP_001276661.1">
    <molecule id="Q925Q8-3"/>
    <property type="nucleotide sequence ID" value="NM_001289732.1"/>
</dbReference>
<dbReference type="RefSeq" id="NP_001276662.1">
    <property type="nucleotide sequence ID" value="NM_001289733.1"/>
</dbReference>
<dbReference type="RefSeq" id="NP_001276663.1">
    <property type="nucleotide sequence ID" value="NM_001289734.1"/>
</dbReference>
<dbReference type="RefSeq" id="NP_291083.1">
    <molecule id="Q925Q8-1"/>
    <property type="nucleotide sequence ID" value="NM_033605.2"/>
</dbReference>
<dbReference type="RefSeq" id="XP_011246018.1">
    <molecule id="Q925Q8-3"/>
    <property type="nucleotide sequence ID" value="XM_011247716.3"/>
</dbReference>
<dbReference type="RefSeq" id="XP_030107386.1">
    <molecule id="Q925Q8-1"/>
    <property type="nucleotide sequence ID" value="XM_030251526.2"/>
</dbReference>
<dbReference type="SMR" id="Q925Q8"/>
<dbReference type="FunCoup" id="Q925Q8">
    <property type="interactions" value="17"/>
</dbReference>
<dbReference type="IntAct" id="Q925Q8">
    <property type="interactions" value="1"/>
</dbReference>
<dbReference type="STRING" id="10090.ENSMUSP00000064393"/>
<dbReference type="iPTMnet" id="Q925Q8"/>
<dbReference type="PhosphoSitePlus" id="Q925Q8"/>
<dbReference type="PaxDb" id="10090-ENSMUSP00000064393"/>
<dbReference type="PeptideAtlas" id="Q925Q8"/>
<dbReference type="ProteomicsDB" id="279271">
    <molecule id="Q925Q8-1"/>
</dbReference>
<dbReference type="ProteomicsDB" id="279272">
    <molecule id="Q925Q8-2"/>
</dbReference>
<dbReference type="ProteomicsDB" id="279273">
    <molecule id="Q925Q8-3"/>
</dbReference>
<dbReference type="Antibodypedia" id="417">
    <property type="antibodies" value="166 antibodies from 29 providers"/>
</dbReference>
<dbReference type="DNASU" id="93837"/>
<dbReference type="Ensembl" id="ENSMUST00000067219.5">
    <molecule id="Q925Q8-1"/>
    <property type="protein sequence ID" value="ENSMUSP00000064393.5"/>
    <property type="gene ID" value="ENSMUSG00000025592.18"/>
</dbReference>
<dbReference type="Ensembl" id="ENSMUST00000113380.8">
    <molecule id="Q925Q8-3"/>
    <property type="protein sequence ID" value="ENSMUSP00000109007.2"/>
    <property type="gene ID" value="ENSMUSG00000025592.18"/>
</dbReference>
<dbReference type="Ensembl" id="ENSMUST00000113382.8">
    <molecule id="Q925Q8-2"/>
    <property type="protein sequence ID" value="ENSMUSP00000109009.2"/>
    <property type="gene ID" value="ENSMUSG00000025592.18"/>
</dbReference>
<dbReference type="GeneID" id="93837"/>
<dbReference type="KEGG" id="mmu:93837"/>
<dbReference type="UCSC" id="uc009udp.1">
    <molecule id="Q925Q8-3"/>
    <property type="organism name" value="mouse"/>
</dbReference>
<dbReference type="UCSC" id="uc009udr.2">
    <molecule id="Q925Q8-2"/>
    <property type="organism name" value="mouse"/>
</dbReference>
<dbReference type="UCSC" id="uc009uds.1">
    <molecule id="Q925Q8-1"/>
    <property type="organism name" value="mouse"/>
</dbReference>
<dbReference type="AGR" id="MGI:1890446"/>
<dbReference type="CTD" id="117154"/>
<dbReference type="MGI" id="MGI:1890446">
    <property type="gene designation" value="Dach2"/>
</dbReference>
<dbReference type="VEuPathDB" id="HostDB:ENSMUSG00000025592"/>
<dbReference type="eggNOG" id="KOG3915">
    <property type="taxonomic scope" value="Eukaryota"/>
</dbReference>
<dbReference type="GeneTree" id="ENSGT00390000001134"/>
<dbReference type="HOGENOM" id="CLU_027923_0_0_1"/>
<dbReference type="InParanoid" id="Q925Q8"/>
<dbReference type="OMA" id="YCLAVAQ"/>
<dbReference type="OrthoDB" id="6436112at2759"/>
<dbReference type="PhylomeDB" id="Q925Q8"/>
<dbReference type="TreeFam" id="TF316697"/>
<dbReference type="BioGRID-ORCS" id="93837">
    <property type="hits" value="1 hit in 77 CRISPR screens"/>
</dbReference>
<dbReference type="ChiTaRS" id="Dach2">
    <property type="organism name" value="mouse"/>
</dbReference>
<dbReference type="PRO" id="PR:Q925Q8"/>
<dbReference type="Proteomes" id="UP000000589">
    <property type="component" value="Chromosome X"/>
</dbReference>
<dbReference type="RNAct" id="Q925Q8">
    <property type="molecule type" value="protein"/>
</dbReference>
<dbReference type="Bgee" id="ENSMUSG00000025592">
    <property type="expression patterns" value="Expressed in vas deferens and 143 other cell types or tissues"/>
</dbReference>
<dbReference type="ExpressionAtlas" id="Q925Q8">
    <property type="expression patterns" value="baseline and differential"/>
</dbReference>
<dbReference type="GO" id="GO:0005634">
    <property type="term" value="C:nucleus"/>
    <property type="evidence" value="ECO:0007669"/>
    <property type="project" value="UniProtKB-SubCell"/>
</dbReference>
<dbReference type="GO" id="GO:0003677">
    <property type="term" value="F:DNA binding"/>
    <property type="evidence" value="ECO:0007669"/>
    <property type="project" value="UniProtKB-KW"/>
</dbReference>
<dbReference type="GO" id="GO:0046545">
    <property type="term" value="P:development of primary female sexual characteristics"/>
    <property type="evidence" value="ECO:0000316"/>
    <property type="project" value="MGI"/>
</dbReference>
<dbReference type="CDD" id="cd21081">
    <property type="entry name" value="DHD_Dac"/>
    <property type="match status" value="1"/>
</dbReference>
<dbReference type="FunFam" id="3.10.260.20:FF:000001">
    <property type="entry name" value="Dachshund homolog 1"/>
    <property type="match status" value="1"/>
</dbReference>
<dbReference type="Gene3D" id="3.10.260.20">
    <property type="entry name" value="Ski"/>
    <property type="match status" value="1"/>
</dbReference>
<dbReference type="InterPro" id="IPR052417">
    <property type="entry name" value="Dachshund_domain"/>
</dbReference>
<dbReference type="InterPro" id="IPR009061">
    <property type="entry name" value="DNA-bd_dom_put_sf"/>
</dbReference>
<dbReference type="InterPro" id="IPR003380">
    <property type="entry name" value="SKI/SNO/DAC"/>
</dbReference>
<dbReference type="InterPro" id="IPR037000">
    <property type="entry name" value="Ski_DNA-bd_sf"/>
</dbReference>
<dbReference type="PANTHER" id="PTHR12577">
    <property type="entry name" value="DACHSHUND"/>
    <property type="match status" value="1"/>
</dbReference>
<dbReference type="PANTHER" id="PTHR12577:SF7">
    <property type="entry name" value="DACHSHUND HOMOLOG 2"/>
    <property type="match status" value="1"/>
</dbReference>
<dbReference type="Pfam" id="PF02437">
    <property type="entry name" value="Ski_Sno_DHD"/>
    <property type="match status" value="1"/>
</dbReference>
<dbReference type="SUPFAM" id="SSF46955">
    <property type="entry name" value="Putative DNA-binding domain"/>
    <property type="match status" value="1"/>
</dbReference>
<gene>
    <name type="primary">Dach2</name>
</gene>